<name>SYH_SOLM1</name>
<keyword id="KW-0030">Aminoacyl-tRNA synthetase</keyword>
<keyword id="KW-0067">ATP-binding</keyword>
<keyword id="KW-0963">Cytoplasm</keyword>
<keyword id="KW-0436">Ligase</keyword>
<keyword id="KW-0547">Nucleotide-binding</keyword>
<keyword id="KW-0648">Protein biosynthesis</keyword>
<accession>C4XT36</accession>
<feature type="chain" id="PRO_1000203133" description="Histidine--tRNA ligase">
    <location>
        <begin position="1"/>
        <end position="421"/>
    </location>
</feature>
<dbReference type="EC" id="6.1.1.21" evidence="1"/>
<dbReference type="EMBL" id="AP010904">
    <property type="protein sequence ID" value="BAH73518.1"/>
    <property type="molecule type" value="Genomic_DNA"/>
</dbReference>
<dbReference type="RefSeq" id="WP_012749611.1">
    <property type="nucleotide sequence ID" value="NC_012796.1"/>
</dbReference>
<dbReference type="SMR" id="C4XT36"/>
<dbReference type="STRING" id="573370.DMR_00270"/>
<dbReference type="KEGG" id="dma:DMR_00270"/>
<dbReference type="eggNOG" id="COG0124">
    <property type="taxonomic scope" value="Bacteria"/>
</dbReference>
<dbReference type="HOGENOM" id="CLU_025113_1_1_7"/>
<dbReference type="OrthoDB" id="9800814at2"/>
<dbReference type="Proteomes" id="UP000009071">
    <property type="component" value="Chromosome"/>
</dbReference>
<dbReference type="GO" id="GO:0005737">
    <property type="term" value="C:cytoplasm"/>
    <property type="evidence" value="ECO:0007669"/>
    <property type="project" value="UniProtKB-SubCell"/>
</dbReference>
<dbReference type="GO" id="GO:0005524">
    <property type="term" value="F:ATP binding"/>
    <property type="evidence" value="ECO:0007669"/>
    <property type="project" value="UniProtKB-UniRule"/>
</dbReference>
<dbReference type="GO" id="GO:0004821">
    <property type="term" value="F:histidine-tRNA ligase activity"/>
    <property type="evidence" value="ECO:0007669"/>
    <property type="project" value="UniProtKB-UniRule"/>
</dbReference>
<dbReference type="GO" id="GO:0006427">
    <property type="term" value="P:histidyl-tRNA aminoacylation"/>
    <property type="evidence" value="ECO:0007669"/>
    <property type="project" value="UniProtKB-UniRule"/>
</dbReference>
<dbReference type="CDD" id="cd00773">
    <property type="entry name" value="HisRS-like_core"/>
    <property type="match status" value="1"/>
</dbReference>
<dbReference type="CDD" id="cd00859">
    <property type="entry name" value="HisRS_anticodon"/>
    <property type="match status" value="1"/>
</dbReference>
<dbReference type="Gene3D" id="3.40.50.800">
    <property type="entry name" value="Anticodon-binding domain"/>
    <property type="match status" value="1"/>
</dbReference>
<dbReference type="Gene3D" id="3.30.930.10">
    <property type="entry name" value="Bira Bifunctional Protein, Domain 2"/>
    <property type="match status" value="1"/>
</dbReference>
<dbReference type="HAMAP" id="MF_00127">
    <property type="entry name" value="His_tRNA_synth"/>
    <property type="match status" value="1"/>
</dbReference>
<dbReference type="InterPro" id="IPR006195">
    <property type="entry name" value="aa-tRNA-synth_II"/>
</dbReference>
<dbReference type="InterPro" id="IPR045864">
    <property type="entry name" value="aa-tRNA-synth_II/BPL/LPL"/>
</dbReference>
<dbReference type="InterPro" id="IPR004154">
    <property type="entry name" value="Anticodon-bd"/>
</dbReference>
<dbReference type="InterPro" id="IPR036621">
    <property type="entry name" value="Anticodon-bd_dom_sf"/>
</dbReference>
<dbReference type="InterPro" id="IPR015807">
    <property type="entry name" value="His-tRNA-ligase"/>
</dbReference>
<dbReference type="InterPro" id="IPR041715">
    <property type="entry name" value="HisRS-like_core"/>
</dbReference>
<dbReference type="InterPro" id="IPR004516">
    <property type="entry name" value="HisRS/HisZ"/>
</dbReference>
<dbReference type="InterPro" id="IPR033656">
    <property type="entry name" value="HisRS_anticodon"/>
</dbReference>
<dbReference type="NCBIfam" id="TIGR00442">
    <property type="entry name" value="hisS"/>
    <property type="match status" value="1"/>
</dbReference>
<dbReference type="PANTHER" id="PTHR43707:SF1">
    <property type="entry name" value="HISTIDINE--TRNA LIGASE, MITOCHONDRIAL-RELATED"/>
    <property type="match status" value="1"/>
</dbReference>
<dbReference type="PANTHER" id="PTHR43707">
    <property type="entry name" value="HISTIDYL-TRNA SYNTHETASE"/>
    <property type="match status" value="1"/>
</dbReference>
<dbReference type="Pfam" id="PF03129">
    <property type="entry name" value="HGTP_anticodon"/>
    <property type="match status" value="1"/>
</dbReference>
<dbReference type="Pfam" id="PF13393">
    <property type="entry name" value="tRNA-synt_His"/>
    <property type="match status" value="1"/>
</dbReference>
<dbReference type="PIRSF" id="PIRSF001549">
    <property type="entry name" value="His-tRNA_synth"/>
    <property type="match status" value="1"/>
</dbReference>
<dbReference type="SUPFAM" id="SSF52954">
    <property type="entry name" value="Class II aaRS ABD-related"/>
    <property type="match status" value="1"/>
</dbReference>
<dbReference type="SUPFAM" id="SSF55681">
    <property type="entry name" value="Class II aaRS and biotin synthetases"/>
    <property type="match status" value="1"/>
</dbReference>
<dbReference type="PROSITE" id="PS50862">
    <property type="entry name" value="AA_TRNA_LIGASE_II"/>
    <property type="match status" value="1"/>
</dbReference>
<sequence length="421" mass="46233">MDKIQKIKGFADLFPPDSTVFSFIEETARQVFSRYGYKELRVPVLERTELFCRSIGEETDVVQKEMYTFPDRKGRSLTLRPEATAGVMRALVEDGRASEGLAKYFAYGPMFRYERPQKGRMRQFHQIDVEAVGSPDALLDAEVLLMLDQYLRALGLKNLVIELNSLGCKACRPIFLDTLREFLKGMHKEQLCEDCMRRKLSNPLRVLDCKVPQCKEFTADAPKITDHLCPDCADHFAAVRRVLDGAGLAYTLNPRLVRGLDYYVRTTFEIVSGDIGSQSSVAGGGRYDGLVHSIGGPDVPGVGFACGMERLALLIDKKAEPAPDFALVVLDAIGLERGLLLAQELRAAGFSGEAPYAAKSAKSQMRAADKSGAAFCLVLGSDELAAGTVVVKNMRAGGQETVSQDILPAHLRARLVAGQED</sequence>
<reference key="1">
    <citation type="journal article" date="2009" name="Genome Res.">
        <title>Whole genome sequence of Desulfovibrio magneticus strain RS-1 revealed common gene clusters in magnetotactic bacteria.</title>
        <authorList>
            <person name="Nakazawa H."/>
            <person name="Arakaki A."/>
            <person name="Narita-Yamada S."/>
            <person name="Yashiro I."/>
            <person name="Jinno K."/>
            <person name="Aoki N."/>
            <person name="Tsuruyama A."/>
            <person name="Okamura Y."/>
            <person name="Tanikawa S."/>
            <person name="Fujita N."/>
            <person name="Takeyama H."/>
            <person name="Matsunaga T."/>
        </authorList>
    </citation>
    <scope>NUCLEOTIDE SEQUENCE [LARGE SCALE GENOMIC DNA]</scope>
    <source>
        <strain>ATCC 700980 / DSM 13731 / RS-1</strain>
    </source>
</reference>
<protein>
    <recommendedName>
        <fullName evidence="1">Histidine--tRNA ligase</fullName>
        <ecNumber evidence="1">6.1.1.21</ecNumber>
    </recommendedName>
    <alternativeName>
        <fullName evidence="1">Histidyl-tRNA synthetase</fullName>
        <shortName evidence="1">HisRS</shortName>
    </alternativeName>
</protein>
<proteinExistence type="inferred from homology"/>
<organism>
    <name type="scientific">Solidesulfovibrio magneticus (strain ATCC 700980 / DSM 13731 / RS-1)</name>
    <name type="common">Desulfovibrio magneticus</name>
    <dbReference type="NCBI Taxonomy" id="573370"/>
    <lineage>
        <taxon>Bacteria</taxon>
        <taxon>Pseudomonadati</taxon>
        <taxon>Thermodesulfobacteriota</taxon>
        <taxon>Desulfovibrionia</taxon>
        <taxon>Desulfovibrionales</taxon>
        <taxon>Desulfovibrionaceae</taxon>
        <taxon>Solidesulfovibrio</taxon>
    </lineage>
</organism>
<gene>
    <name evidence="1" type="primary">hisS</name>
    <name type="ordered locus">DMR_00270</name>
</gene>
<evidence type="ECO:0000255" key="1">
    <source>
        <dbReference type="HAMAP-Rule" id="MF_00127"/>
    </source>
</evidence>
<comment type="catalytic activity">
    <reaction evidence="1">
        <text>tRNA(His) + L-histidine + ATP = L-histidyl-tRNA(His) + AMP + diphosphate + H(+)</text>
        <dbReference type="Rhea" id="RHEA:17313"/>
        <dbReference type="Rhea" id="RHEA-COMP:9665"/>
        <dbReference type="Rhea" id="RHEA-COMP:9689"/>
        <dbReference type="ChEBI" id="CHEBI:15378"/>
        <dbReference type="ChEBI" id="CHEBI:30616"/>
        <dbReference type="ChEBI" id="CHEBI:33019"/>
        <dbReference type="ChEBI" id="CHEBI:57595"/>
        <dbReference type="ChEBI" id="CHEBI:78442"/>
        <dbReference type="ChEBI" id="CHEBI:78527"/>
        <dbReference type="ChEBI" id="CHEBI:456215"/>
        <dbReference type="EC" id="6.1.1.21"/>
    </reaction>
</comment>
<comment type="subunit">
    <text evidence="1">Homodimer.</text>
</comment>
<comment type="subcellular location">
    <subcellularLocation>
        <location evidence="1">Cytoplasm</location>
    </subcellularLocation>
</comment>
<comment type="similarity">
    <text evidence="1">Belongs to the class-II aminoacyl-tRNA synthetase family.</text>
</comment>